<protein>
    <recommendedName>
        <fullName evidence="1">Holo-[acyl-carrier-protein] synthase</fullName>
        <shortName evidence="1">Holo-ACP synthase</shortName>
        <ecNumber evidence="1">2.7.8.7</ecNumber>
    </recommendedName>
    <alternativeName>
        <fullName evidence="1">4'-phosphopantetheinyl transferase AcpS</fullName>
    </alternativeName>
</protein>
<keyword id="KW-0963">Cytoplasm</keyword>
<keyword id="KW-0275">Fatty acid biosynthesis</keyword>
<keyword id="KW-0276">Fatty acid metabolism</keyword>
<keyword id="KW-0444">Lipid biosynthesis</keyword>
<keyword id="KW-0443">Lipid metabolism</keyword>
<keyword id="KW-0460">Magnesium</keyword>
<keyword id="KW-0479">Metal-binding</keyword>
<keyword id="KW-1185">Reference proteome</keyword>
<keyword id="KW-0808">Transferase</keyword>
<comment type="function">
    <text evidence="1">Transfers the 4'-phosphopantetheine moiety from coenzyme A to a Ser of acyl-carrier-protein.</text>
</comment>
<comment type="catalytic activity">
    <reaction evidence="1">
        <text>apo-[ACP] + CoA = holo-[ACP] + adenosine 3',5'-bisphosphate + H(+)</text>
        <dbReference type="Rhea" id="RHEA:12068"/>
        <dbReference type="Rhea" id="RHEA-COMP:9685"/>
        <dbReference type="Rhea" id="RHEA-COMP:9690"/>
        <dbReference type="ChEBI" id="CHEBI:15378"/>
        <dbReference type="ChEBI" id="CHEBI:29999"/>
        <dbReference type="ChEBI" id="CHEBI:57287"/>
        <dbReference type="ChEBI" id="CHEBI:58343"/>
        <dbReference type="ChEBI" id="CHEBI:64479"/>
        <dbReference type="EC" id="2.7.8.7"/>
    </reaction>
</comment>
<comment type="cofactor">
    <cofactor evidence="1">
        <name>Mg(2+)</name>
        <dbReference type="ChEBI" id="CHEBI:18420"/>
    </cofactor>
</comment>
<comment type="subcellular location">
    <subcellularLocation>
        <location evidence="1">Cytoplasm</location>
    </subcellularLocation>
</comment>
<comment type="similarity">
    <text evidence="1">Belongs to the P-Pant transferase superfamily. AcpS family.</text>
</comment>
<organism>
    <name type="scientific">Campylobacter lari (strain RM2100 / D67 / ATCC BAA-1060)</name>
    <dbReference type="NCBI Taxonomy" id="306263"/>
    <lineage>
        <taxon>Bacteria</taxon>
        <taxon>Pseudomonadati</taxon>
        <taxon>Campylobacterota</taxon>
        <taxon>Epsilonproteobacteria</taxon>
        <taxon>Campylobacterales</taxon>
        <taxon>Campylobacteraceae</taxon>
        <taxon>Campylobacter</taxon>
    </lineage>
</organism>
<gene>
    <name evidence="1" type="primary">acpS</name>
    <name type="ordered locus">Cla_0270</name>
</gene>
<sequence length="116" mass="12820">MIGCDIVACSRIESIYNRHNTLFLDKFLSKQEQAYIKNTNTIAGFWAIKEAASKALGVGISKECSFFDIIIFKDNKNAPHIKFSTKVMKEFDIKSASVSVAHDGGFAIAVVAIEKN</sequence>
<name>ACPS_CAMLR</name>
<proteinExistence type="inferred from homology"/>
<evidence type="ECO:0000255" key="1">
    <source>
        <dbReference type="HAMAP-Rule" id="MF_00101"/>
    </source>
</evidence>
<dbReference type="EC" id="2.7.8.7" evidence="1"/>
<dbReference type="EMBL" id="CP000932">
    <property type="protein sequence ID" value="ACM63633.1"/>
    <property type="molecule type" value="Genomic_DNA"/>
</dbReference>
<dbReference type="RefSeq" id="WP_012661017.1">
    <property type="nucleotide sequence ID" value="NC_012039.1"/>
</dbReference>
<dbReference type="SMR" id="B9KEZ8"/>
<dbReference type="STRING" id="306263.Cla_0270"/>
<dbReference type="KEGG" id="cla:CLA_0270"/>
<dbReference type="PATRIC" id="fig|306263.5.peg.268"/>
<dbReference type="eggNOG" id="COG0736">
    <property type="taxonomic scope" value="Bacteria"/>
</dbReference>
<dbReference type="HOGENOM" id="CLU_089696_0_2_7"/>
<dbReference type="Proteomes" id="UP000007727">
    <property type="component" value="Chromosome"/>
</dbReference>
<dbReference type="GO" id="GO:0005737">
    <property type="term" value="C:cytoplasm"/>
    <property type="evidence" value="ECO:0007669"/>
    <property type="project" value="UniProtKB-SubCell"/>
</dbReference>
<dbReference type="GO" id="GO:0008897">
    <property type="term" value="F:holo-[acyl-carrier-protein] synthase activity"/>
    <property type="evidence" value="ECO:0007669"/>
    <property type="project" value="UniProtKB-UniRule"/>
</dbReference>
<dbReference type="GO" id="GO:0000287">
    <property type="term" value="F:magnesium ion binding"/>
    <property type="evidence" value="ECO:0007669"/>
    <property type="project" value="UniProtKB-UniRule"/>
</dbReference>
<dbReference type="GO" id="GO:0006633">
    <property type="term" value="P:fatty acid biosynthetic process"/>
    <property type="evidence" value="ECO:0007669"/>
    <property type="project" value="UniProtKB-UniRule"/>
</dbReference>
<dbReference type="Gene3D" id="3.90.470.20">
    <property type="entry name" value="4'-phosphopantetheinyl transferase domain"/>
    <property type="match status" value="1"/>
</dbReference>
<dbReference type="HAMAP" id="MF_00101">
    <property type="entry name" value="AcpS"/>
    <property type="match status" value="1"/>
</dbReference>
<dbReference type="InterPro" id="IPR008278">
    <property type="entry name" value="4-PPantetheinyl_Trfase_dom"/>
</dbReference>
<dbReference type="InterPro" id="IPR037143">
    <property type="entry name" value="4-PPantetheinyl_Trfase_dom_sf"/>
</dbReference>
<dbReference type="InterPro" id="IPR002582">
    <property type="entry name" value="ACPS"/>
</dbReference>
<dbReference type="InterPro" id="IPR004568">
    <property type="entry name" value="Ppantetheine-prot_Trfase_dom"/>
</dbReference>
<dbReference type="NCBIfam" id="TIGR00516">
    <property type="entry name" value="acpS"/>
    <property type="match status" value="1"/>
</dbReference>
<dbReference type="NCBIfam" id="TIGR00556">
    <property type="entry name" value="pantethn_trn"/>
    <property type="match status" value="1"/>
</dbReference>
<dbReference type="Pfam" id="PF01648">
    <property type="entry name" value="ACPS"/>
    <property type="match status" value="1"/>
</dbReference>
<dbReference type="SUPFAM" id="SSF56214">
    <property type="entry name" value="4'-phosphopantetheinyl transferase"/>
    <property type="match status" value="1"/>
</dbReference>
<accession>B9KEZ8</accession>
<reference key="1">
    <citation type="journal article" date="2008" name="Foodborne Pathog. Dis.">
        <title>The complete genome sequence and analysis of the human pathogen Campylobacter lari.</title>
        <authorList>
            <person name="Miller W.G."/>
            <person name="Wang G."/>
            <person name="Binnewies T.T."/>
            <person name="Parker C.T."/>
        </authorList>
    </citation>
    <scope>NUCLEOTIDE SEQUENCE [LARGE SCALE GENOMIC DNA]</scope>
    <source>
        <strain>RM2100 / D67 / ATCC BAA-1060</strain>
    </source>
</reference>
<feature type="chain" id="PRO_1000118800" description="Holo-[acyl-carrier-protein] synthase">
    <location>
        <begin position="1"/>
        <end position="116"/>
    </location>
</feature>
<feature type="binding site" evidence="1">
    <location>
        <position position="5"/>
    </location>
    <ligand>
        <name>Mg(2+)</name>
        <dbReference type="ChEBI" id="CHEBI:18420"/>
    </ligand>
</feature>
<feature type="binding site" evidence="1">
    <location>
        <position position="50"/>
    </location>
    <ligand>
        <name>Mg(2+)</name>
        <dbReference type="ChEBI" id="CHEBI:18420"/>
    </ligand>
</feature>